<gene>
    <name evidence="1" type="primary">rlmN</name>
    <name type="ordered locus">LACR_0188</name>
</gene>
<dbReference type="EC" id="2.1.1.192" evidence="1"/>
<dbReference type="EMBL" id="CP000425">
    <property type="protein sequence ID" value="ABJ71806.1"/>
    <property type="molecule type" value="Genomic_DNA"/>
</dbReference>
<dbReference type="RefSeq" id="WP_011675239.1">
    <property type="nucleotide sequence ID" value="NC_008527.1"/>
</dbReference>
<dbReference type="SMR" id="Q032R6"/>
<dbReference type="GeneID" id="61108498"/>
<dbReference type="KEGG" id="llc:LACR_0188"/>
<dbReference type="HOGENOM" id="CLU_029101_0_1_9"/>
<dbReference type="Proteomes" id="UP000000240">
    <property type="component" value="Chromosome"/>
</dbReference>
<dbReference type="GO" id="GO:0005737">
    <property type="term" value="C:cytoplasm"/>
    <property type="evidence" value="ECO:0007669"/>
    <property type="project" value="UniProtKB-SubCell"/>
</dbReference>
<dbReference type="GO" id="GO:0051539">
    <property type="term" value="F:4 iron, 4 sulfur cluster binding"/>
    <property type="evidence" value="ECO:0007669"/>
    <property type="project" value="UniProtKB-UniRule"/>
</dbReference>
<dbReference type="GO" id="GO:0046872">
    <property type="term" value="F:metal ion binding"/>
    <property type="evidence" value="ECO:0007669"/>
    <property type="project" value="UniProtKB-KW"/>
</dbReference>
<dbReference type="GO" id="GO:0070040">
    <property type="term" value="F:rRNA (adenine(2503)-C2-)-methyltransferase activity"/>
    <property type="evidence" value="ECO:0007669"/>
    <property type="project" value="UniProtKB-UniRule"/>
</dbReference>
<dbReference type="GO" id="GO:0019843">
    <property type="term" value="F:rRNA binding"/>
    <property type="evidence" value="ECO:0007669"/>
    <property type="project" value="UniProtKB-UniRule"/>
</dbReference>
<dbReference type="GO" id="GO:0002935">
    <property type="term" value="F:tRNA (adenine(37)-C2)-methyltransferase activity"/>
    <property type="evidence" value="ECO:0007669"/>
    <property type="project" value="UniProtKB-UniRule"/>
</dbReference>
<dbReference type="GO" id="GO:0000049">
    <property type="term" value="F:tRNA binding"/>
    <property type="evidence" value="ECO:0007669"/>
    <property type="project" value="UniProtKB-UniRule"/>
</dbReference>
<dbReference type="GO" id="GO:0070475">
    <property type="term" value="P:rRNA base methylation"/>
    <property type="evidence" value="ECO:0007669"/>
    <property type="project" value="UniProtKB-UniRule"/>
</dbReference>
<dbReference type="GO" id="GO:0030488">
    <property type="term" value="P:tRNA methylation"/>
    <property type="evidence" value="ECO:0007669"/>
    <property type="project" value="UniProtKB-UniRule"/>
</dbReference>
<dbReference type="CDD" id="cd01335">
    <property type="entry name" value="Radical_SAM"/>
    <property type="match status" value="1"/>
</dbReference>
<dbReference type="FunFam" id="3.20.20.70:FF:000014">
    <property type="entry name" value="Probable dual-specificity RNA methyltransferase RlmN"/>
    <property type="match status" value="1"/>
</dbReference>
<dbReference type="Gene3D" id="1.10.150.530">
    <property type="match status" value="1"/>
</dbReference>
<dbReference type="Gene3D" id="3.20.20.70">
    <property type="entry name" value="Aldolase class I"/>
    <property type="match status" value="1"/>
</dbReference>
<dbReference type="HAMAP" id="MF_01849">
    <property type="entry name" value="RNA_methyltr_RlmN"/>
    <property type="match status" value="1"/>
</dbReference>
<dbReference type="InterPro" id="IPR013785">
    <property type="entry name" value="Aldolase_TIM"/>
</dbReference>
<dbReference type="InterPro" id="IPR040072">
    <property type="entry name" value="Methyltransferase_A"/>
</dbReference>
<dbReference type="InterPro" id="IPR048641">
    <property type="entry name" value="RlmN_N"/>
</dbReference>
<dbReference type="InterPro" id="IPR027492">
    <property type="entry name" value="RNA_MTrfase_RlmN"/>
</dbReference>
<dbReference type="InterPro" id="IPR004383">
    <property type="entry name" value="rRNA_lsu_MTrfase_RlmN/Cfr"/>
</dbReference>
<dbReference type="InterPro" id="IPR007197">
    <property type="entry name" value="rSAM"/>
</dbReference>
<dbReference type="NCBIfam" id="TIGR00048">
    <property type="entry name" value="rRNA_mod_RlmN"/>
    <property type="match status" value="1"/>
</dbReference>
<dbReference type="PANTHER" id="PTHR30544">
    <property type="entry name" value="23S RRNA METHYLTRANSFERASE"/>
    <property type="match status" value="1"/>
</dbReference>
<dbReference type="PANTHER" id="PTHR30544:SF5">
    <property type="entry name" value="RADICAL SAM CORE DOMAIN-CONTAINING PROTEIN"/>
    <property type="match status" value="1"/>
</dbReference>
<dbReference type="Pfam" id="PF04055">
    <property type="entry name" value="Radical_SAM"/>
    <property type="match status" value="1"/>
</dbReference>
<dbReference type="Pfam" id="PF21016">
    <property type="entry name" value="RlmN_N"/>
    <property type="match status" value="1"/>
</dbReference>
<dbReference type="PIRSF" id="PIRSF006004">
    <property type="entry name" value="CHP00048"/>
    <property type="match status" value="1"/>
</dbReference>
<dbReference type="SFLD" id="SFLDF00275">
    <property type="entry name" value="adenosine_C2_methyltransferase"/>
    <property type="match status" value="1"/>
</dbReference>
<dbReference type="SFLD" id="SFLDS00029">
    <property type="entry name" value="Radical_SAM"/>
    <property type="match status" value="1"/>
</dbReference>
<dbReference type="SUPFAM" id="SSF102114">
    <property type="entry name" value="Radical SAM enzymes"/>
    <property type="match status" value="1"/>
</dbReference>
<dbReference type="PROSITE" id="PS51918">
    <property type="entry name" value="RADICAL_SAM"/>
    <property type="match status" value="1"/>
</dbReference>
<keyword id="KW-0004">4Fe-4S</keyword>
<keyword id="KW-0963">Cytoplasm</keyword>
<keyword id="KW-1015">Disulfide bond</keyword>
<keyword id="KW-0408">Iron</keyword>
<keyword id="KW-0411">Iron-sulfur</keyword>
<keyword id="KW-0479">Metal-binding</keyword>
<keyword id="KW-0489">Methyltransferase</keyword>
<keyword id="KW-0698">rRNA processing</keyword>
<keyword id="KW-0949">S-adenosyl-L-methionine</keyword>
<keyword id="KW-0808">Transferase</keyword>
<keyword id="KW-0819">tRNA processing</keyword>
<name>RLMN_LACLS</name>
<evidence type="ECO:0000255" key="1">
    <source>
        <dbReference type="HAMAP-Rule" id="MF_01849"/>
    </source>
</evidence>
<evidence type="ECO:0000255" key="2">
    <source>
        <dbReference type="PROSITE-ProRule" id="PRU01266"/>
    </source>
</evidence>
<feature type="chain" id="PRO_0000350223" description="Probable dual-specificity RNA methyltransferase RlmN">
    <location>
        <begin position="1"/>
        <end position="365"/>
    </location>
</feature>
<feature type="domain" description="Radical SAM core" evidence="2">
    <location>
        <begin position="105"/>
        <end position="344"/>
    </location>
</feature>
<feature type="active site" description="Proton acceptor" evidence="1">
    <location>
        <position position="99"/>
    </location>
</feature>
<feature type="active site" description="S-methylcysteine intermediate" evidence="1">
    <location>
        <position position="349"/>
    </location>
</feature>
<feature type="binding site" evidence="1">
    <location>
        <position position="119"/>
    </location>
    <ligand>
        <name>[4Fe-4S] cluster</name>
        <dbReference type="ChEBI" id="CHEBI:49883"/>
        <note>4Fe-4S-S-AdoMet</note>
    </ligand>
</feature>
<feature type="binding site" evidence="1">
    <location>
        <position position="123"/>
    </location>
    <ligand>
        <name>[4Fe-4S] cluster</name>
        <dbReference type="ChEBI" id="CHEBI:49883"/>
        <note>4Fe-4S-S-AdoMet</note>
    </ligand>
</feature>
<feature type="binding site" evidence="1">
    <location>
        <position position="126"/>
    </location>
    <ligand>
        <name>[4Fe-4S] cluster</name>
        <dbReference type="ChEBI" id="CHEBI:49883"/>
        <note>4Fe-4S-S-AdoMet</note>
    </ligand>
</feature>
<feature type="binding site" evidence="1">
    <location>
        <begin position="171"/>
        <end position="172"/>
    </location>
    <ligand>
        <name>S-adenosyl-L-methionine</name>
        <dbReference type="ChEBI" id="CHEBI:59789"/>
    </ligand>
</feature>
<feature type="binding site" evidence="1">
    <location>
        <position position="203"/>
    </location>
    <ligand>
        <name>S-adenosyl-L-methionine</name>
        <dbReference type="ChEBI" id="CHEBI:59789"/>
    </ligand>
</feature>
<feature type="binding site" evidence="1">
    <location>
        <begin position="227"/>
        <end position="229"/>
    </location>
    <ligand>
        <name>S-adenosyl-L-methionine</name>
        <dbReference type="ChEBI" id="CHEBI:59789"/>
    </ligand>
</feature>
<feature type="binding site" evidence="1">
    <location>
        <position position="305"/>
    </location>
    <ligand>
        <name>S-adenosyl-L-methionine</name>
        <dbReference type="ChEBI" id="CHEBI:59789"/>
    </ligand>
</feature>
<feature type="disulfide bond" description="(transient)" evidence="1">
    <location>
        <begin position="112"/>
        <end position="349"/>
    </location>
</feature>
<accession>Q032R6</accession>
<sequence>MTENITTETRPSIYGLTRDQLIEWAIENGEKKFRATQVWDWLYRKRVQSFEEMSNLSAVFIDKLNEAFILNPLEQVVVQESADGTVKYLFMLPDKVMIETVLMRQSYGLSVCVTTQVGCNMGCTFCASGILKKERDVTAGEIVSQIMLVQKYFDERGLDERVSHVVVMGIGEPFDNYEHLMNFLRVINDDNGLAIGARHITVSTCGFMPAKIKEFAHENLQINLAISLHAPNNELRTSLMRITRNAPLEKLFEAIDYYTETTNRRVTYEYIMLSGENDSPEIAQQLADLIKPRNKLSYVNLIPYNPVAEHIKYERSTKDNTAKFYDVLKKNGINCVVRQEHGTDIDAACGQLRSKQIKKNKAKLA</sequence>
<protein>
    <recommendedName>
        <fullName evidence="1">Probable dual-specificity RNA methyltransferase RlmN</fullName>
        <ecNumber evidence="1">2.1.1.192</ecNumber>
    </recommendedName>
    <alternativeName>
        <fullName evidence="1">23S rRNA (adenine(2503)-C(2))-methyltransferase</fullName>
    </alternativeName>
    <alternativeName>
        <fullName evidence="1">23S rRNA m2A2503 methyltransferase</fullName>
    </alternativeName>
    <alternativeName>
        <fullName evidence="1">Ribosomal RNA large subunit methyltransferase N</fullName>
    </alternativeName>
    <alternativeName>
        <fullName evidence="1">tRNA (adenine(37)-C(2))-methyltransferase</fullName>
    </alternativeName>
    <alternativeName>
        <fullName evidence="1">tRNA m2A37 methyltransferase</fullName>
    </alternativeName>
</protein>
<proteinExistence type="inferred from homology"/>
<reference key="1">
    <citation type="journal article" date="2006" name="Proc. Natl. Acad. Sci. U.S.A.">
        <title>Comparative genomics of the lactic acid bacteria.</title>
        <authorList>
            <person name="Makarova K.S."/>
            <person name="Slesarev A."/>
            <person name="Wolf Y.I."/>
            <person name="Sorokin A."/>
            <person name="Mirkin B."/>
            <person name="Koonin E.V."/>
            <person name="Pavlov A."/>
            <person name="Pavlova N."/>
            <person name="Karamychev V."/>
            <person name="Polouchine N."/>
            <person name="Shakhova V."/>
            <person name="Grigoriev I."/>
            <person name="Lou Y."/>
            <person name="Rohksar D."/>
            <person name="Lucas S."/>
            <person name="Huang K."/>
            <person name="Goodstein D.M."/>
            <person name="Hawkins T."/>
            <person name="Plengvidhya V."/>
            <person name="Welker D."/>
            <person name="Hughes J."/>
            <person name="Goh Y."/>
            <person name="Benson A."/>
            <person name="Baldwin K."/>
            <person name="Lee J.-H."/>
            <person name="Diaz-Muniz I."/>
            <person name="Dosti B."/>
            <person name="Smeianov V."/>
            <person name="Wechter W."/>
            <person name="Barabote R."/>
            <person name="Lorca G."/>
            <person name="Altermann E."/>
            <person name="Barrangou R."/>
            <person name="Ganesan B."/>
            <person name="Xie Y."/>
            <person name="Rawsthorne H."/>
            <person name="Tamir D."/>
            <person name="Parker C."/>
            <person name="Breidt F."/>
            <person name="Broadbent J.R."/>
            <person name="Hutkins R."/>
            <person name="O'Sullivan D."/>
            <person name="Steele J."/>
            <person name="Unlu G."/>
            <person name="Saier M.H. Jr."/>
            <person name="Klaenhammer T."/>
            <person name="Richardson P."/>
            <person name="Kozyavkin S."/>
            <person name="Weimer B.C."/>
            <person name="Mills D.A."/>
        </authorList>
    </citation>
    <scope>NUCLEOTIDE SEQUENCE [LARGE SCALE GENOMIC DNA]</scope>
    <source>
        <strain>SK11</strain>
    </source>
</reference>
<organism>
    <name type="scientific">Lactococcus lactis subsp. cremoris (strain SK11)</name>
    <dbReference type="NCBI Taxonomy" id="272622"/>
    <lineage>
        <taxon>Bacteria</taxon>
        <taxon>Bacillati</taxon>
        <taxon>Bacillota</taxon>
        <taxon>Bacilli</taxon>
        <taxon>Lactobacillales</taxon>
        <taxon>Streptococcaceae</taxon>
        <taxon>Lactococcus</taxon>
        <taxon>Lactococcus cremoris subsp. cremoris</taxon>
    </lineage>
</organism>
<comment type="function">
    <text evidence="1">Specifically methylates position 2 of adenine 2503 in 23S rRNA and position 2 of adenine 37 in tRNAs.</text>
</comment>
<comment type="catalytic activity">
    <reaction evidence="1">
        <text>adenosine(2503) in 23S rRNA + 2 reduced [2Fe-2S]-[ferredoxin] + 2 S-adenosyl-L-methionine = 2-methyladenosine(2503) in 23S rRNA + 5'-deoxyadenosine + L-methionine + 2 oxidized [2Fe-2S]-[ferredoxin] + S-adenosyl-L-homocysteine</text>
        <dbReference type="Rhea" id="RHEA:42916"/>
        <dbReference type="Rhea" id="RHEA-COMP:10000"/>
        <dbReference type="Rhea" id="RHEA-COMP:10001"/>
        <dbReference type="Rhea" id="RHEA-COMP:10152"/>
        <dbReference type="Rhea" id="RHEA-COMP:10282"/>
        <dbReference type="ChEBI" id="CHEBI:17319"/>
        <dbReference type="ChEBI" id="CHEBI:33737"/>
        <dbReference type="ChEBI" id="CHEBI:33738"/>
        <dbReference type="ChEBI" id="CHEBI:57844"/>
        <dbReference type="ChEBI" id="CHEBI:57856"/>
        <dbReference type="ChEBI" id="CHEBI:59789"/>
        <dbReference type="ChEBI" id="CHEBI:74411"/>
        <dbReference type="ChEBI" id="CHEBI:74497"/>
        <dbReference type="EC" id="2.1.1.192"/>
    </reaction>
</comment>
<comment type="catalytic activity">
    <reaction evidence="1">
        <text>adenosine(37) in tRNA + 2 reduced [2Fe-2S]-[ferredoxin] + 2 S-adenosyl-L-methionine = 2-methyladenosine(37) in tRNA + 5'-deoxyadenosine + L-methionine + 2 oxidized [2Fe-2S]-[ferredoxin] + S-adenosyl-L-homocysteine</text>
        <dbReference type="Rhea" id="RHEA:43332"/>
        <dbReference type="Rhea" id="RHEA-COMP:10000"/>
        <dbReference type="Rhea" id="RHEA-COMP:10001"/>
        <dbReference type="Rhea" id="RHEA-COMP:10162"/>
        <dbReference type="Rhea" id="RHEA-COMP:10485"/>
        <dbReference type="ChEBI" id="CHEBI:17319"/>
        <dbReference type="ChEBI" id="CHEBI:33737"/>
        <dbReference type="ChEBI" id="CHEBI:33738"/>
        <dbReference type="ChEBI" id="CHEBI:57844"/>
        <dbReference type="ChEBI" id="CHEBI:57856"/>
        <dbReference type="ChEBI" id="CHEBI:59789"/>
        <dbReference type="ChEBI" id="CHEBI:74411"/>
        <dbReference type="ChEBI" id="CHEBI:74497"/>
        <dbReference type="EC" id="2.1.1.192"/>
    </reaction>
</comment>
<comment type="cofactor">
    <cofactor evidence="1">
        <name>[4Fe-4S] cluster</name>
        <dbReference type="ChEBI" id="CHEBI:49883"/>
    </cofactor>
    <text evidence="1">Binds 1 [4Fe-4S] cluster. The cluster is coordinated with 3 cysteines and an exchangeable S-adenosyl-L-methionine.</text>
</comment>
<comment type="subcellular location">
    <subcellularLocation>
        <location evidence="1">Cytoplasm</location>
    </subcellularLocation>
</comment>
<comment type="miscellaneous">
    <text evidence="1">Reaction proceeds by a ping-pong mechanism involving intermediate methylation of a conserved cysteine residue.</text>
</comment>
<comment type="similarity">
    <text evidence="1">Belongs to the radical SAM superfamily. RlmN family.</text>
</comment>